<gene>
    <name evidence="1" type="primary">glyS</name>
    <name type="synonym">glyT</name>
    <name type="ordered locus">LL1096</name>
    <name type="ORF">L0360</name>
</gene>
<organism>
    <name type="scientific">Lactococcus lactis subsp. lactis (strain IL1403)</name>
    <name type="common">Streptococcus lactis</name>
    <dbReference type="NCBI Taxonomy" id="272623"/>
    <lineage>
        <taxon>Bacteria</taxon>
        <taxon>Bacillati</taxon>
        <taxon>Bacillota</taxon>
        <taxon>Bacilli</taxon>
        <taxon>Lactobacillales</taxon>
        <taxon>Streptococcaceae</taxon>
        <taxon>Lactococcus</taxon>
    </lineage>
</organism>
<proteinExistence type="inferred from homology"/>
<protein>
    <recommendedName>
        <fullName evidence="1">Glycine--tRNA ligase beta subunit</fullName>
        <ecNumber evidence="1">6.1.1.14</ecNumber>
    </recommendedName>
    <alternativeName>
        <fullName evidence="1">Glycyl-tRNA synthetase beta subunit</fullName>
        <shortName evidence="1">GlyRS</shortName>
    </alternativeName>
</protein>
<name>SYGB_LACLA</name>
<evidence type="ECO:0000255" key="1">
    <source>
        <dbReference type="HAMAP-Rule" id="MF_00255"/>
    </source>
</evidence>
<comment type="catalytic activity">
    <reaction evidence="1">
        <text>tRNA(Gly) + glycine + ATP = glycyl-tRNA(Gly) + AMP + diphosphate</text>
        <dbReference type="Rhea" id="RHEA:16013"/>
        <dbReference type="Rhea" id="RHEA-COMP:9664"/>
        <dbReference type="Rhea" id="RHEA-COMP:9683"/>
        <dbReference type="ChEBI" id="CHEBI:30616"/>
        <dbReference type="ChEBI" id="CHEBI:33019"/>
        <dbReference type="ChEBI" id="CHEBI:57305"/>
        <dbReference type="ChEBI" id="CHEBI:78442"/>
        <dbReference type="ChEBI" id="CHEBI:78522"/>
        <dbReference type="ChEBI" id="CHEBI:456215"/>
        <dbReference type="EC" id="6.1.1.14"/>
    </reaction>
</comment>
<comment type="subunit">
    <text evidence="1">Tetramer of two alpha and two beta subunits.</text>
</comment>
<comment type="subcellular location">
    <subcellularLocation>
        <location evidence="1">Cytoplasm</location>
    </subcellularLocation>
</comment>
<comment type="similarity">
    <text evidence="1">Belongs to the class-II aminoacyl-tRNA synthetase family.</text>
</comment>
<feature type="chain" id="PRO_0000072908" description="Glycine--tRNA ligase beta subunit">
    <location>
        <begin position="1"/>
        <end position="673"/>
    </location>
</feature>
<sequence>MTNYLLEIGLEEIPAHLVTPSINQLAERMETFLKENRLEFDKIIKFSTPRRLAIIVEGLAEASEAIDEEVKGPSAKIAKDAQGNWSKAIQGFSRGQGATPDDLILKGDYYYAKKHIDGVKAEEILSKVGDEVIAKMTFSTYMKWGNNDFLFVRPIQWIVSLLEDKVVAFDLLDVTANRFSRGHRFLANVEVELKNANDYASKMPENFVLVDAEHRKAEISAQILALASENKWQVTLHKDLLEEVNNIVEYPTAFVGSFDPKYLSVPAEVLVTSMRDNQRYFEVYNQEGQLAPNFISVRNGNAENIENVVLGNEKVLVARLEDAEFFWKEDQKLKIEDLVAKLAKVTFHAKIGSITEHMARTKEIAAKLADIAGLTDEEKRDVARSAEIYKFDLLTGMVGEFDELQGVMGEKYALLAGENANVSAAIREHYMPTSAEGELPETKVGSVLAAADKIDSVLSFFNVGLIPSGSNDPYALRRAVQGLIRIIEKMNWHFDLSLFIDQFEGENHLEILDFVKARIQKLLLEKLDRHDIVEAAINSSNFDITNMMESAFVIDGHKLHEPFKPAIENVSRSINLVKKAKDIKEINPTLFEEDAEEALYNVVISLQNQWTYMPGEEKFRAIVHSLAPAIETFFESVMVMAEDLSVRDNRIALLSEVVALTSVMADFSLINTK</sequence>
<accession>Q9CGK0</accession>
<dbReference type="EC" id="6.1.1.14" evidence="1"/>
<dbReference type="EMBL" id="AE005176">
    <property type="protein sequence ID" value="AAK05194.1"/>
    <property type="molecule type" value="Genomic_DNA"/>
</dbReference>
<dbReference type="PIR" id="H86761">
    <property type="entry name" value="H86761"/>
</dbReference>
<dbReference type="RefSeq" id="NP_267252.1">
    <property type="nucleotide sequence ID" value="NC_002662.1"/>
</dbReference>
<dbReference type="RefSeq" id="WP_003130669.1">
    <property type="nucleotide sequence ID" value="NC_002662.1"/>
</dbReference>
<dbReference type="SMR" id="Q9CGK0"/>
<dbReference type="PaxDb" id="272623-L0360"/>
<dbReference type="EnsemblBacteria" id="AAK05194">
    <property type="protein sequence ID" value="AAK05194"/>
    <property type="gene ID" value="L0360"/>
</dbReference>
<dbReference type="KEGG" id="lla:L0360"/>
<dbReference type="PATRIC" id="fig|272623.7.peg.1174"/>
<dbReference type="eggNOG" id="COG0751">
    <property type="taxonomic scope" value="Bacteria"/>
</dbReference>
<dbReference type="HOGENOM" id="CLU_007220_2_2_9"/>
<dbReference type="OrthoDB" id="9775440at2"/>
<dbReference type="Proteomes" id="UP000002196">
    <property type="component" value="Chromosome"/>
</dbReference>
<dbReference type="GO" id="GO:0005829">
    <property type="term" value="C:cytosol"/>
    <property type="evidence" value="ECO:0007669"/>
    <property type="project" value="TreeGrafter"/>
</dbReference>
<dbReference type="GO" id="GO:0005524">
    <property type="term" value="F:ATP binding"/>
    <property type="evidence" value="ECO:0007669"/>
    <property type="project" value="UniProtKB-UniRule"/>
</dbReference>
<dbReference type="GO" id="GO:0004820">
    <property type="term" value="F:glycine-tRNA ligase activity"/>
    <property type="evidence" value="ECO:0007669"/>
    <property type="project" value="UniProtKB-UniRule"/>
</dbReference>
<dbReference type="GO" id="GO:0006426">
    <property type="term" value="P:glycyl-tRNA aminoacylation"/>
    <property type="evidence" value="ECO:0007669"/>
    <property type="project" value="UniProtKB-UniRule"/>
</dbReference>
<dbReference type="HAMAP" id="MF_00255">
    <property type="entry name" value="Gly_tRNA_synth_beta"/>
    <property type="match status" value="1"/>
</dbReference>
<dbReference type="InterPro" id="IPR015944">
    <property type="entry name" value="Gly-tRNA-synth_bsu"/>
</dbReference>
<dbReference type="InterPro" id="IPR006194">
    <property type="entry name" value="Gly-tRNA-synth_heterodimer"/>
</dbReference>
<dbReference type="NCBIfam" id="TIGR00211">
    <property type="entry name" value="glyS"/>
    <property type="match status" value="1"/>
</dbReference>
<dbReference type="PANTHER" id="PTHR30075:SF2">
    <property type="entry name" value="GLYCINE--TRNA LIGASE, CHLOROPLASTIC_MITOCHONDRIAL 2"/>
    <property type="match status" value="1"/>
</dbReference>
<dbReference type="PANTHER" id="PTHR30075">
    <property type="entry name" value="GLYCYL-TRNA SYNTHETASE"/>
    <property type="match status" value="1"/>
</dbReference>
<dbReference type="Pfam" id="PF02092">
    <property type="entry name" value="tRNA_synt_2f"/>
    <property type="match status" value="1"/>
</dbReference>
<dbReference type="PRINTS" id="PR01045">
    <property type="entry name" value="TRNASYNTHGB"/>
</dbReference>
<dbReference type="SUPFAM" id="SSF109604">
    <property type="entry name" value="HD-domain/PDEase-like"/>
    <property type="match status" value="1"/>
</dbReference>
<dbReference type="PROSITE" id="PS50861">
    <property type="entry name" value="AA_TRNA_LIGASE_II_GLYAB"/>
    <property type="match status" value="1"/>
</dbReference>
<keyword id="KW-0030">Aminoacyl-tRNA synthetase</keyword>
<keyword id="KW-0067">ATP-binding</keyword>
<keyword id="KW-0963">Cytoplasm</keyword>
<keyword id="KW-0436">Ligase</keyword>
<keyword id="KW-0547">Nucleotide-binding</keyword>
<keyword id="KW-0648">Protein biosynthesis</keyword>
<keyword id="KW-1185">Reference proteome</keyword>
<reference key="1">
    <citation type="journal article" date="2001" name="Genome Res.">
        <title>The complete genome sequence of the lactic acid bacterium Lactococcus lactis ssp. lactis IL1403.</title>
        <authorList>
            <person name="Bolotin A."/>
            <person name="Wincker P."/>
            <person name="Mauger S."/>
            <person name="Jaillon O."/>
            <person name="Malarme K."/>
            <person name="Weissenbach J."/>
            <person name="Ehrlich S.D."/>
            <person name="Sorokin A."/>
        </authorList>
    </citation>
    <scope>NUCLEOTIDE SEQUENCE [LARGE SCALE GENOMIC DNA]</scope>
    <source>
        <strain>IL1403</strain>
    </source>
</reference>